<evidence type="ECO:0000250" key="1"/>
<evidence type="ECO:0000255" key="2"/>
<evidence type="ECO:0000305" key="3"/>
<protein>
    <recommendedName>
        <fullName>Nitrogenase iron protein 2</fullName>
        <ecNumber>1.18.6.1</ecNumber>
    </recommendedName>
    <alternativeName>
        <fullName>Nitrogenase Fe protein 2</fullName>
    </alternativeName>
    <alternativeName>
        <fullName>Nitrogenase component II</fullName>
    </alternativeName>
    <alternativeName>
        <fullName>Nitrogenase reductase</fullName>
    </alternativeName>
</protein>
<feature type="chain" id="PRO_0000139482" description="Nitrogenase iron protein 2">
    <location>
        <begin position="1"/>
        <end position="297"/>
    </location>
</feature>
<feature type="binding site" evidence="2">
    <location>
        <begin position="14"/>
        <end position="21"/>
    </location>
    <ligand>
        <name>ATP</name>
        <dbReference type="ChEBI" id="CHEBI:30616"/>
    </ligand>
</feature>
<feature type="binding site" evidence="1">
    <location>
        <position position="102"/>
    </location>
    <ligand>
        <name>[4Fe-4S] cluster</name>
        <dbReference type="ChEBI" id="CHEBI:49883"/>
        <note>ligand shared between dimeric partners</note>
    </ligand>
</feature>
<feature type="binding site" evidence="1">
    <location>
        <position position="136"/>
    </location>
    <ligand>
        <name>[4Fe-4S] cluster</name>
        <dbReference type="ChEBI" id="CHEBI:49883"/>
        <note>ligand shared between dimeric partners</note>
    </ligand>
</feature>
<feature type="modified residue" description="ADP-ribosylarginine; by dinitrogenase reductase ADP-ribosyltransferase" evidence="1">
    <location>
        <position position="105"/>
    </location>
</feature>
<feature type="sequence conflict" description="In Ref. 1; AAB65801." evidence="3" ref="1">
    <original>K</original>
    <variation>SK</variation>
    <location>
        <position position="297"/>
    </location>
</feature>
<keyword id="KW-0004">4Fe-4S</keyword>
<keyword id="KW-0013">ADP-ribosylation</keyword>
<keyword id="KW-0067">ATP-binding</keyword>
<keyword id="KW-0408">Iron</keyword>
<keyword id="KW-0411">Iron-sulfur</keyword>
<keyword id="KW-0479">Metal-binding</keyword>
<keyword id="KW-0535">Nitrogen fixation</keyword>
<keyword id="KW-0547">Nucleotide-binding</keyword>
<keyword id="KW-0560">Oxidoreductase</keyword>
<keyword id="KW-1185">Reference proteome</keyword>
<accession>O30577</accession>
<organism>
    <name type="scientific">Nostoc sp. (strain PCC 7120 / SAG 25.82 / UTEX 2576)</name>
    <dbReference type="NCBI Taxonomy" id="103690"/>
    <lineage>
        <taxon>Bacteria</taxon>
        <taxon>Bacillati</taxon>
        <taxon>Cyanobacteriota</taxon>
        <taxon>Cyanophyceae</taxon>
        <taxon>Nostocales</taxon>
        <taxon>Nostocaceae</taxon>
        <taxon>Nostoc</taxon>
    </lineage>
</organism>
<proteinExistence type="inferred from homology"/>
<gene>
    <name type="primary">nifH2</name>
    <name type="ordered locus">alr0874</name>
</gene>
<comment type="function">
    <text evidence="1">The key enzymatic reactions in nitrogen fixation are catalyzed by the nitrogenase complex, which has 2 components: the iron protein and the molybdenum-iron protein.</text>
</comment>
<comment type="catalytic activity">
    <reaction>
        <text>N2 + 8 reduced [2Fe-2S]-[ferredoxin] + 16 ATP + 16 H2O = H2 + 8 oxidized [2Fe-2S]-[ferredoxin] + 2 NH4(+) + 16 ADP + 16 phosphate + 6 H(+)</text>
        <dbReference type="Rhea" id="RHEA:21448"/>
        <dbReference type="Rhea" id="RHEA-COMP:10000"/>
        <dbReference type="Rhea" id="RHEA-COMP:10001"/>
        <dbReference type="ChEBI" id="CHEBI:15377"/>
        <dbReference type="ChEBI" id="CHEBI:15378"/>
        <dbReference type="ChEBI" id="CHEBI:17997"/>
        <dbReference type="ChEBI" id="CHEBI:18276"/>
        <dbReference type="ChEBI" id="CHEBI:28938"/>
        <dbReference type="ChEBI" id="CHEBI:30616"/>
        <dbReference type="ChEBI" id="CHEBI:33737"/>
        <dbReference type="ChEBI" id="CHEBI:33738"/>
        <dbReference type="ChEBI" id="CHEBI:43474"/>
        <dbReference type="ChEBI" id="CHEBI:456216"/>
        <dbReference type="EC" id="1.18.6.1"/>
    </reaction>
</comment>
<comment type="cofactor">
    <cofactor evidence="1">
        <name>[4Fe-4S] cluster</name>
        <dbReference type="ChEBI" id="CHEBI:49883"/>
    </cofactor>
    <text evidence="1">Binds 1 [4Fe-4S] cluster per dimer.</text>
</comment>
<comment type="subunit">
    <text evidence="1">Homodimer.</text>
</comment>
<comment type="PTM">
    <text evidence="1">The reversible ADP-ribosylation of Arg-105 inactivates the nitrogenase reductase and regulates nitrogenase activity.</text>
</comment>
<comment type="similarity">
    <text evidence="3">Belongs to the NifH/BchL/ChlL family.</text>
</comment>
<name>NIFH2_NOSS1</name>
<dbReference type="EC" id="1.18.6.1"/>
<dbReference type="EMBL" id="AF012326">
    <property type="protein sequence ID" value="AAB65801.1"/>
    <property type="molecule type" value="Genomic_DNA"/>
</dbReference>
<dbReference type="EMBL" id="BA000019">
    <property type="protein sequence ID" value="BAB72831.1"/>
    <property type="molecule type" value="Genomic_DNA"/>
</dbReference>
<dbReference type="PIR" id="AG1915">
    <property type="entry name" value="AG1915"/>
</dbReference>
<dbReference type="SMR" id="O30577"/>
<dbReference type="STRING" id="103690.gene:10492887"/>
<dbReference type="KEGG" id="ana:alr0874"/>
<dbReference type="eggNOG" id="COG1348">
    <property type="taxonomic scope" value="Bacteria"/>
</dbReference>
<dbReference type="OrthoDB" id="9778641at2"/>
<dbReference type="Proteomes" id="UP000002483">
    <property type="component" value="Chromosome"/>
</dbReference>
<dbReference type="GO" id="GO:0051539">
    <property type="term" value="F:4 iron, 4 sulfur cluster binding"/>
    <property type="evidence" value="ECO:0007669"/>
    <property type="project" value="UniProtKB-KW"/>
</dbReference>
<dbReference type="GO" id="GO:0005524">
    <property type="term" value="F:ATP binding"/>
    <property type="evidence" value="ECO:0007669"/>
    <property type="project" value="UniProtKB-UniRule"/>
</dbReference>
<dbReference type="GO" id="GO:0046872">
    <property type="term" value="F:metal ion binding"/>
    <property type="evidence" value="ECO:0007669"/>
    <property type="project" value="UniProtKB-KW"/>
</dbReference>
<dbReference type="GO" id="GO:0016163">
    <property type="term" value="F:nitrogenase activity"/>
    <property type="evidence" value="ECO:0007669"/>
    <property type="project" value="UniProtKB-UniRule"/>
</dbReference>
<dbReference type="GO" id="GO:0009399">
    <property type="term" value="P:nitrogen fixation"/>
    <property type="evidence" value="ECO:0007669"/>
    <property type="project" value="UniProtKB-UniRule"/>
</dbReference>
<dbReference type="CDD" id="cd02040">
    <property type="entry name" value="NifH"/>
    <property type="match status" value="1"/>
</dbReference>
<dbReference type="FunFam" id="3.40.50.300:FF:001379">
    <property type="entry name" value="Nitrogenase iron protein 1"/>
    <property type="match status" value="1"/>
</dbReference>
<dbReference type="Gene3D" id="3.40.50.300">
    <property type="entry name" value="P-loop containing nucleotide triphosphate hydrolases"/>
    <property type="match status" value="1"/>
</dbReference>
<dbReference type="HAMAP" id="MF_00533">
    <property type="entry name" value="NifH"/>
    <property type="match status" value="1"/>
</dbReference>
<dbReference type="InterPro" id="IPR030655">
    <property type="entry name" value="NifH/chlL_CS"/>
</dbReference>
<dbReference type="InterPro" id="IPR000392">
    <property type="entry name" value="NifH/frxC"/>
</dbReference>
<dbReference type="InterPro" id="IPR005977">
    <property type="entry name" value="Nitrogenase_Fe_NifH"/>
</dbReference>
<dbReference type="InterPro" id="IPR027417">
    <property type="entry name" value="P-loop_NTPase"/>
</dbReference>
<dbReference type="NCBIfam" id="TIGR01287">
    <property type="entry name" value="nifH"/>
    <property type="match status" value="1"/>
</dbReference>
<dbReference type="PANTHER" id="PTHR42864">
    <property type="entry name" value="LIGHT-INDEPENDENT PROTOCHLOROPHYLLIDE REDUCTASE IRON-SULFUR ATP-BINDING PROTEIN"/>
    <property type="match status" value="1"/>
</dbReference>
<dbReference type="PANTHER" id="PTHR42864:SF2">
    <property type="entry name" value="LIGHT-INDEPENDENT PROTOCHLOROPHYLLIDE REDUCTASE IRON-SULFUR ATP-BINDING PROTEIN"/>
    <property type="match status" value="1"/>
</dbReference>
<dbReference type="Pfam" id="PF00142">
    <property type="entry name" value="Fer4_NifH"/>
    <property type="match status" value="1"/>
</dbReference>
<dbReference type="PIRSF" id="PIRSF000363">
    <property type="entry name" value="Nitrogenase_iron"/>
    <property type="match status" value="1"/>
</dbReference>
<dbReference type="PRINTS" id="PR00091">
    <property type="entry name" value="NITROGNASEII"/>
</dbReference>
<dbReference type="SUPFAM" id="SSF52540">
    <property type="entry name" value="P-loop containing nucleoside triphosphate hydrolases"/>
    <property type="match status" value="1"/>
</dbReference>
<dbReference type="PROSITE" id="PS00746">
    <property type="entry name" value="NIFH_FRXC_1"/>
    <property type="match status" value="1"/>
</dbReference>
<dbReference type="PROSITE" id="PS00692">
    <property type="entry name" value="NIFH_FRXC_2"/>
    <property type="match status" value="1"/>
</dbReference>
<dbReference type="PROSITE" id="PS51026">
    <property type="entry name" value="NIFH_FRXC_3"/>
    <property type="match status" value="1"/>
</dbReference>
<sequence>MSIDKKIRQIAFYGKGGIGKSTTSQNTLAAMAEMGQRILIVGCDPKADSTRLMLHSKAQTTVLHLAAERGAVEDLELEEVMLTGFRGVKCVESGGPEPGVGCAGRGIITAINFLEENGAYQDVDFVSYDVLGDVVCGGFAMPIRENKAQEIYIVTSGEMMAMYAANNIARGILKYAHTGGVRLGGLICNSRNVDREIELIETLAKRLNTQMIHYVPRDNIVQHAELRRMTVNEYAPDSNQGNEYRILANKIINNENLKIPTPIEMEELEELLIEFGILESEENAAKMIATTSESKSK</sequence>
<reference key="1">
    <citation type="submission" date="1997-07" db="EMBL/GenBank/DDBJ databases">
        <title>Second copy of nifH in Anabaena sp. strain PCC 7120.</title>
        <authorList>
            <person name="Robinson S.J."/>
            <person name="Haselkorn R."/>
        </authorList>
    </citation>
    <scope>NUCLEOTIDE SEQUENCE [GENOMIC DNA]</scope>
</reference>
<reference key="2">
    <citation type="journal article" date="2001" name="DNA Res.">
        <title>Complete genomic sequence of the filamentous nitrogen-fixing cyanobacterium Anabaena sp. strain PCC 7120.</title>
        <authorList>
            <person name="Kaneko T."/>
            <person name="Nakamura Y."/>
            <person name="Wolk C.P."/>
            <person name="Kuritz T."/>
            <person name="Sasamoto S."/>
            <person name="Watanabe A."/>
            <person name="Iriguchi M."/>
            <person name="Ishikawa A."/>
            <person name="Kawashima K."/>
            <person name="Kimura T."/>
            <person name="Kishida Y."/>
            <person name="Kohara M."/>
            <person name="Matsumoto M."/>
            <person name="Matsuno A."/>
            <person name="Muraki A."/>
            <person name="Nakazaki N."/>
            <person name="Shimpo S."/>
            <person name="Sugimoto M."/>
            <person name="Takazawa M."/>
            <person name="Yamada M."/>
            <person name="Yasuda M."/>
            <person name="Tabata S."/>
        </authorList>
    </citation>
    <scope>NUCLEOTIDE SEQUENCE [LARGE SCALE GENOMIC DNA]</scope>
    <source>
        <strain>PCC 7120 / SAG 25.82 / UTEX 2576</strain>
    </source>
</reference>